<keyword id="KW-0479">Metal-binding</keyword>
<keyword id="KW-0665">Pyrimidine biosynthesis</keyword>
<keyword id="KW-0862">Zinc</keyword>
<protein>
    <recommendedName>
        <fullName evidence="1">Aspartate carbamoyltransferase regulatory chain</fullName>
    </recommendedName>
</protein>
<proteinExistence type="inferred from homology"/>
<dbReference type="EMBL" id="CP000139">
    <property type="protein sequence ID" value="ABR40964.1"/>
    <property type="molecule type" value="Genomic_DNA"/>
</dbReference>
<dbReference type="RefSeq" id="WP_005841999.1">
    <property type="nucleotide sequence ID" value="NZ_JANSWM010000114.1"/>
</dbReference>
<dbReference type="SMR" id="A6L5K0"/>
<dbReference type="STRING" id="435590.BVU_3338"/>
<dbReference type="PaxDb" id="435590-BVU_3338"/>
<dbReference type="GeneID" id="5304299"/>
<dbReference type="KEGG" id="bvu:BVU_3338"/>
<dbReference type="eggNOG" id="COG1781">
    <property type="taxonomic scope" value="Bacteria"/>
</dbReference>
<dbReference type="HOGENOM" id="CLU_128576_0_0_10"/>
<dbReference type="BioCyc" id="BVUL435590:G1G59-3460-MONOMER"/>
<dbReference type="Proteomes" id="UP000002861">
    <property type="component" value="Chromosome"/>
</dbReference>
<dbReference type="GO" id="GO:0009347">
    <property type="term" value="C:aspartate carbamoyltransferase complex"/>
    <property type="evidence" value="ECO:0007669"/>
    <property type="project" value="InterPro"/>
</dbReference>
<dbReference type="GO" id="GO:0046872">
    <property type="term" value="F:metal ion binding"/>
    <property type="evidence" value="ECO:0007669"/>
    <property type="project" value="UniProtKB-KW"/>
</dbReference>
<dbReference type="GO" id="GO:0006207">
    <property type="term" value="P:'de novo' pyrimidine nucleobase biosynthetic process"/>
    <property type="evidence" value="ECO:0007669"/>
    <property type="project" value="InterPro"/>
</dbReference>
<dbReference type="GO" id="GO:0006221">
    <property type="term" value="P:pyrimidine nucleotide biosynthetic process"/>
    <property type="evidence" value="ECO:0007669"/>
    <property type="project" value="UniProtKB-UniRule"/>
</dbReference>
<dbReference type="Gene3D" id="2.30.30.20">
    <property type="entry name" value="Aspartate carbamoyltransferase regulatory subunit, C-terminal domain"/>
    <property type="match status" value="1"/>
</dbReference>
<dbReference type="Gene3D" id="3.30.70.140">
    <property type="entry name" value="Aspartate carbamoyltransferase regulatory subunit, N-terminal domain"/>
    <property type="match status" value="1"/>
</dbReference>
<dbReference type="HAMAP" id="MF_00002">
    <property type="entry name" value="Asp_carb_tr_reg"/>
    <property type="match status" value="1"/>
</dbReference>
<dbReference type="InterPro" id="IPR020545">
    <property type="entry name" value="Asp_carbamoyltransf_reg_N"/>
</dbReference>
<dbReference type="InterPro" id="IPR002801">
    <property type="entry name" value="Asp_carbamoylTrfase_reg"/>
</dbReference>
<dbReference type="InterPro" id="IPR020542">
    <property type="entry name" value="Asp_carbamoyltrfase_reg_C"/>
</dbReference>
<dbReference type="InterPro" id="IPR036792">
    <property type="entry name" value="Asp_carbatrfase_reg_C_sf"/>
</dbReference>
<dbReference type="InterPro" id="IPR036793">
    <property type="entry name" value="Asp_carbatrfase_reg_N_sf"/>
</dbReference>
<dbReference type="NCBIfam" id="TIGR00240">
    <property type="entry name" value="ATCase_reg"/>
    <property type="match status" value="1"/>
</dbReference>
<dbReference type="PANTHER" id="PTHR35805">
    <property type="entry name" value="ASPARTATE CARBAMOYLTRANSFERASE REGULATORY CHAIN"/>
    <property type="match status" value="1"/>
</dbReference>
<dbReference type="PANTHER" id="PTHR35805:SF1">
    <property type="entry name" value="ASPARTATE CARBAMOYLTRANSFERASE REGULATORY CHAIN"/>
    <property type="match status" value="1"/>
</dbReference>
<dbReference type="Pfam" id="PF01948">
    <property type="entry name" value="PyrI"/>
    <property type="match status" value="1"/>
</dbReference>
<dbReference type="Pfam" id="PF02748">
    <property type="entry name" value="PyrI_C"/>
    <property type="match status" value="1"/>
</dbReference>
<dbReference type="SUPFAM" id="SSF57825">
    <property type="entry name" value="Aspartate carbamoyltransferase, Regulatory-chain, C-terminal domain"/>
    <property type="match status" value="1"/>
</dbReference>
<dbReference type="SUPFAM" id="SSF54893">
    <property type="entry name" value="Aspartate carbamoyltransferase, Regulatory-chain, N-terminal domain"/>
    <property type="match status" value="1"/>
</dbReference>
<gene>
    <name evidence="1" type="primary">pyrI</name>
    <name type="ordered locus">BVU_3338</name>
</gene>
<name>PYRI_PHOV8</name>
<sequence length="155" mass="17407">MKMSDNKQALQVAALKNGTVIDHIPSDKLFTVVALLGLQDSDSNITIGNNFESKKLGKKGIIKVADRFFTDEEISRLSVVAPNVKLNIIRDYEVVEKKQVLMPEELRGIVKCANPKCITNNEPMTTLFHVIDKEHGILKCHYCEKEQSKEGIKLL</sequence>
<reference key="1">
    <citation type="journal article" date="2007" name="PLoS Biol.">
        <title>Evolution of symbiotic bacteria in the distal human intestine.</title>
        <authorList>
            <person name="Xu J."/>
            <person name="Mahowald M.A."/>
            <person name="Ley R.E."/>
            <person name="Lozupone C.A."/>
            <person name="Hamady M."/>
            <person name="Martens E.C."/>
            <person name="Henrissat B."/>
            <person name="Coutinho P.M."/>
            <person name="Minx P."/>
            <person name="Latreille P."/>
            <person name="Cordum H."/>
            <person name="Van Brunt A."/>
            <person name="Kim K."/>
            <person name="Fulton R.S."/>
            <person name="Fulton L.A."/>
            <person name="Clifton S.W."/>
            <person name="Wilson R.K."/>
            <person name="Knight R.D."/>
            <person name="Gordon J.I."/>
        </authorList>
    </citation>
    <scope>NUCLEOTIDE SEQUENCE [LARGE SCALE GENOMIC DNA]</scope>
    <source>
        <strain>ATCC 8482 / DSM 1447 / JCM 5826 / CCUG 4940 / NBRC 14291 / NCTC 11154</strain>
    </source>
</reference>
<organism>
    <name type="scientific">Phocaeicola vulgatus (strain ATCC 8482 / DSM 1447 / JCM 5826 / CCUG 4940 / NBRC 14291 / NCTC 11154)</name>
    <name type="common">Bacteroides vulgatus</name>
    <dbReference type="NCBI Taxonomy" id="435590"/>
    <lineage>
        <taxon>Bacteria</taxon>
        <taxon>Pseudomonadati</taxon>
        <taxon>Bacteroidota</taxon>
        <taxon>Bacteroidia</taxon>
        <taxon>Bacteroidales</taxon>
        <taxon>Bacteroidaceae</taxon>
        <taxon>Phocaeicola</taxon>
    </lineage>
</organism>
<accession>A6L5K0</accession>
<feature type="chain" id="PRO_0000321495" description="Aspartate carbamoyltransferase regulatory chain">
    <location>
        <begin position="1"/>
        <end position="155"/>
    </location>
</feature>
<feature type="binding site" evidence="1">
    <location>
        <position position="112"/>
    </location>
    <ligand>
        <name>Zn(2+)</name>
        <dbReference type="ChEBI" id="CHEBI:29105"/>
    </ligand>
</feature>
<feature type="binding site" evidence="1">
    <location>
        <position position="117"/>
    </location>
    <ligand>
        <name>Zn(2+)</name>
        <dbReference type="ChEBI" id="CHEBI:29105"/>
    </ligand>
</feature>
<feature type="binding site" evidence="1">
    <location>
        <position position="140"/>
    </location>
    <ligand>
        <name>Zn(2+)</name>
        <dbReference type="ChEBI" id="CHEBI:29105"/>
    </ligand>
</feature>
<feature type="binding site" evidence="1">
    <location>
        <position position="143"/>
    </location>
    <ligand>
        <name>Zn(2+)</name>
        <dbReference type="ChEBI" id="CHEBI:29105"/>
    </ligand>
</feature>
<comment type="function">
    <text evidence="1">Involved in allosteric regulation of aspartate carbamoyltransferase.</text>
</comment>
<comment type="cofactor">
    <cofactor evidence="1">
        <name>Zn(2+)</name>
        <dbReference type="ChEBI" id="CHEBI:29105"/>
    </cofactor>
    <text evidence="1">Binds 1 zinc ion per subunit.</text>
</comment>
<comment type="subunit">
    <text evidence="1">Contains catalytic and regulatory chains.</text>
</comment>
<comment type="similarity">
    <text evidence="1">Belongs to the PyrI family.</text>
</comment>
<evidence type="ECO:0000255" key="1">
    <source>
        <dbReference type="HAMAP-Rule" id="MF_00002"/>
    </source>
</evidence>